<gene>
    <name evidence="1" type="primary">gltX</name>
    <name type="ordered locus">NGK_2326</name>
</gene>
<comment type="function">
    <text evidence="1">Catalyzes the attachment of glutamate to tRNA(Glu) in a two-step reaction: glutamate is first activated by ATP to form Glu-AMP and then transferred to the acceptor end of tRNA(Glu).</text>
</comment>
<comment type="catalytic activity">
    <reaction evidence="1">
        <text>tRNA(Glu) + L-glutamate + ATP = L-glutamyl-tRNA(Glu) + AMP + diphosphate</text>
        <dbReference type="Rhea" id="RHEA:23540"/>
        <dbReference type="Rhea" id="RHEA-COMP:9663"/>
        <dbReference type="Rhea" id="RHEA-COMP:9680"/>
        <dbReference type="ChEBI" id="CHEBI:29985"/>
        <dbReference type="ChEBI" id="CHEBI:30616"/>
        <dbReference type="ChEBI" id="CHEBI:33019"/>
        <dbReference type="ChEBI" id="CHEBI:78442"/>
        <dbReference type="ChEBI" id="CHEBI:78520"/>
        <dbReference type="ChEBI" id="CHEBI:456215"/>
        <dbReference type="EC" id="6.1.1.17"/>
    </reaction>
</comment>
<comment type="subunit">
    <text evidence="1">Monomer.</text>
</comment>
<comment type="subcellular location">
    <subcellularLocation>
        <location evidence="1">Cytoplasm</location>
    </subcellularLocation>
</comment>
<comment type="similarity">
    <text evidence="1">Belongs to the class-I aminoacyl-tRNA synthetase family. Glutamate--tRNA ligase type 1 subfamily.</text>
</comment>
<name>SYE_NEIG2</name>
<feature type="chain" id="PRO_1000090093" description="Glutamate--tRNA ligase">
    <location>
        <begin position="1"/>
        <end position="464"/>
    </location>
</feature>
<feature type="short sequence motif" description="'HIGH' region" evidence="1">
    <location>
        <begin position="9"/>
        <end position="19"/>
    </location>
</feature>
<feature type="short sequence motif" description="'KMSKS' region" evidence="1">
    <location>
        <begin position="242"/>
        <end position="246"/>
    </location>
</feature>
<feature type="binding site" evidence="1">
    <location>
        <position position="245"/>
    </location>
    <ligand>
        <name>ATP</name>
        <dbReference type="ChEBI" id="CHEBI:30616"/>
    </ligand>
</feature>
<sequence length="464" mass="52330">MTVKTRFAPSPTGYLHIGGVRTALFSWAFARHHKGEFLLRIEDTDLARSTAESVNIILDGMKWVGLDYDNADNVVYQTRRFDRYKEVIAELLAKGDAYYCYCSKEELEAMREKAEKEGTATYDRRWRPEAGKTLPEIPAGVQPVVRFKTPLDGVTKWTDLVKGEISIPNEALDDLIIARADGTPTYNFCAVVDDYDMGVTHIIRGDDHVNNTPKQINILKAIGANLPEYGHLPMILNEQGKKISKRSGDTVAITDFGAMGILPEAMLNYLARLGWAHGDDEFFTTEQFIEWFDLKDVSPSPSRMDLKKLYWINGEHIKITPDGKLTELVKPRLALRDIHETEKPALEDVLALVKDRAQDLNALADECLYFYKKQVPAEADVAKHWDDEAAARMLRFAERLEGLEDWNAKAIHDLFKPFCDEEGIKMGKLGMPLRLAVCGTAKTPSVDAVLALISKEEVLKRIRA</sequence>
<evidence type="ECO:0000255" key="1">
    <source>
        <dbReference type="HAMAP-Rule" id="MF_00022"/>
    </source>
</evidence>
<reference key="1">
    <citation type="journal article" date="2008" name="J. Bacteriol.">
        <title>Complete genome sequence of Neisseria gonorrhoeae NCCP11945.</title>
        <authorList>
            <person name="Chung G.T."/>
            <person name="Yoo J.S."/>
            <person name="Oh H.B."/>
            <person name="Lee Y.S."/>
            <person name="Cha S.H."/>
            <person name="Kim S.J."/>
            <person name="Yoo C.K."/>
        </authorList>
    </citation>
    <scope>NUCLEOTIDE SEQUENCE [LARGE SCALE GENOMIC DNA]</scope>
    <source>
        <strain>NCCP11945</strain>
    </source>
</reference>
<accession>B4RPQ3</accession>
<keyword id="KW-0030">Aminoacyl-tRNA synthetase</keyword>
<keyword id="KW-0067">ATP-binding</keyword>
<keyword id="KW-0963">Cytoplasm</keyword>
<keyword id="KW-0436">Ligase</keyword>
<keyword id="KW-0547">Nucleotide-binding</keyword>
<keyword id="KW-0648">Protein biosynthesis</keyword>
<organism>
    <name type="scientific">Neisseria gonorrhoeae (strain NCCP11945)</name>
    <dbReference type="NCBI Taxonomy" id="521006"/>
    <lineage>
        <taxon>Bacteria</taxon>
        <taxon>Pseudomonadati</taxon>
        <taxon>Pseudomonadota</taxon>
        <taxon>Betaproteobacteria</taxon>
        <taxon>Neisseriales</taxon>
        <taxon>Neisseriaceae</taxon>
        <taxon>Neisseria</taxon>
    </lineage>
</organism>
<proteinExistence type="inferred from homology"/>
<dbReference type="EC" id="6.1.1.17" evidence="1"/>
<dbReference type="EMBL" id="CP001050">
    <property type="protein sequence ID" value="ACF30930.1"/>
    <property type="molecule type" value="Genomic_DNA"/>
</dbReference>
<dbReference type="RefSeq" id="WP_003705176.1">
    <property type="nucleotide sequence ID" value="NC_011035.1"/>
</dbReference>
<dbReference type="SMR" id="B4RPQ3"/>
<dbReference type="KEGG" id="ngk:NGK_2326"/>
<dbReference type="HOGENOM" id="CLU_015768_6_0_4"/>
<dbReference type="Proteomes" id="UP000002564">
    <property type="component" value="Chromosome"/>
</dbReference>
<dbReference type="GO" id="GO:0005829">
    <property type="term" value="C:cytosol"/>
    <property type="evidence" value="ECO:0007669"/>
    <property type="project" value="TreeGrafter"/>
</dbReference>
<dbReference type="GO" id="GO:0005524">
    <property type="term" value="F:ATP binding"/>
    <property type="evidence" value="ECO:0007669"/>
    <property type="project" value="UniProtKB-UniRule"/>
</dbReference>
<dbReference type="GO" id="GO:0004818">
    <property type="term" value="F:glutamate-tRNA ligase activity"/>
    <property type="evidence" value="ECO:0007669"/>
    <property type="project" value="UniProtKB-UniRule"/>
</dbReference>
<dbReference type="GO" id="GO:0000049">
    <property type="term" value="F:tRNA binding"/>
    <property type="evidence" value="ECO:0007669"/>
    <property type="project" value="InterPro"/>
</dbReference>
<dbReference type="GO" id="GO:0008270">
    <property type="term" value="F:zinc ion binding"/>
    <property type="evidence" value="ECO:0007669"/>
    <property type="project" value="InterPro"/>
</dbReference>
<dbReference type="GO" id="GO:0006424">
    <property type="term" value="P:glutamyl-tRNA aminoacylation"/>
    <property type="evidence" value="ECO:0007669"/>
    <property type="project" value="UniProtKB-UniRule"/>
</dbReference>
<dbReference type="CDD" id="cd00808">
    <property type="entry name" value="GluRS_core"/>
    <property type="match status" value="1"/>
</dbReference>
<dbReference type="FunFam" id="3.40.50.620:FF:000007">
    <property type="entry name" value="Glutamate--tRNA ligase"/>
    <property type="match status" value="1"/>
</dbReference>
<dbReference type="Gene3D" id="1.10.10.350">
    <property type="match status" value="1"/>
</dbReference>
<dbReference type="Gene3D" id="3.40.50.620">
    <property type="entry name" value="HUPs"/>
    <property type="match status" value="1"/>
</dbReference>
<dbReference type="HAMAP" id="MF_00022">
    <property type="entry name" value="Glu_tRNA_synth_type1"/>
    <property type="match status" value="1"/>
</dbReference>
<dbReference type="InterPro" id="IPR045462">
    <property type="entry name" value="aa-tRNA-synth_I_cd-bd"/>
</dbReference>
<dbReference type="InterPro" id="IPR020751">
    <property type="entry name" value="aa-tRNA-synth_I_codon-bd_sub2"/>
</dbReference>
<dbReference type="InterPro" id="IPR001412">
    <property type="entry name" value="aa-tRNA-synth_I_CS"/>
</dbReference>
<dbReference type="InterPro" id="IPR008925">
    <property type="entry name" value="aa_tRNA-synth_I_cd-bd_sf"/>
</dbReference>
<dbReference type="InterPro" id="IPR004527">
    <property type="entry name" value="Glu-tRNA-ligase_bac/mito"/>
</dbReference>
<dbReference type="InterPro" id="IPR000924">
    <property type="entry name" value="Glu/Gln-tRNA-synth"/>
</dbReference>
<dbReference type="InterPro" id="IPR020058">
    <property type="entry name" value="Glu/Gln-tRNA-synth_Ib_cat-dom"/>
</dbReference>
<dbReference type="InterPro" id="IPR049940">
    <property type="entry name" value="GluQ/Sye"/>
</dbReference>
<dbReference type="InterPro" id="IPR033910">
    <property type="entry name" value="GluRS_core"/>
</dbReference>
<dbReference type="InterPro" id="IPR014729">
    <property type="entry name" value="Rossmann-like_a/b/a_fold"/>
</dbReference>
<dbReference type="NCBIfam" id="TIGR00464">
    <property type="entry name" value="gltX_bact"/>
    <property type="match status" value="1"/>
</dbReference>
<dbReference type="PANTHER" id="PTHR43311">
    <property type="entry name" value="GLUTAMATE--TRNA LIGASE"/>
    <property type="match status" value="1"/>
</dbReference>
<dbReference type="PANTHER" id="PTHR43311:SF2">
    <property type="entry name" value="GLUTAMATE--TRNA LIGASE, MITOCHONDRIAL-RELATED"/>
    <property type="match status" value="1"/>
</dbReference>
<dbReference type="Pfam" id="PF19269">
    <property type="entry name" value="Anticodon_2"/>
    <property type="match status" value="1"/>
</dbReference>
<dbReference type="Pfam" id="PF00749">
    <property type="entry name" value="tRNA-synt_1c"/>
    <property type="match status" value="1"/>
</dbReference>
<dbReference type="PRINTS" id="PR00987">
    <property type="entry name" value="TRNASYNTHGLU"/>
</dbReference>
<dbReference type="SUPFAM" id="SSF48163">
    <property type="entry name" value="An anticodon-binding domain of class I aminoacyl-tRNA synthetases"/>
    <property type="match status" value="1"/>
</dbReference>
<dbReference type="SUPFAM" id="SSF52374">
    <property type="entry name" value="Nucleotidylyl transferase"/>
    <property type="match status" value="1"/>
</dbReference>
<dbReference type="PROSITE" id="PS00178">
    <property type="entry name" value="AA_TRNA_LIGASE_I"/>
    <property type="match status" value="1"/>
</dbReference>
<protein>
    <recommendedName>
        <fullName evidence="1">Glutamate--tRNA ligase</fullName>
        <ecNumber evidence="1">6.1.1.17</ecNumber>
    </recommendedName>
    <alternativeName>
        <fullName evidence="1">Glutamyl-tRNA synthetase</fullName>
        <shortName evidence="1">GluRS</shortName>
    </alternativeName>
</protein>